<dbReference type="EMBL" id="AP006715">
    <property type="protein sequence ID" value="BAE92314.1"/>
    <property type="molecule type" value="Genomic_DNA"/>
</dbReference>
<dbReference type="RefSeq" id="YP_536871.1">
    <property type="nucleotide sequence ID" value="NC_007932.1"/>
</dbReference>
<dbReference type="SMR" id="Q1XDU7"/>
<dbReference type="GeneID" id="3978993"/>
<dbReference type="GO" id="GO:0009507">
    <property type="term" value="C:chloroplast"/>
    <property type="evidence" value="ECO:0007669"/>
    <property type="project" value="UniProtKB-SubCell"/>
</dbReference>
<dbReference type="GO" id="GO:1990904">
    <property type="term" value="C:ribonucleoprotein complex"/>
    <property type="evidence" value="ECO:0007669"/>
    <property type="project" value="UniProtKB-KW"/>
</dbReference>
<dbReference type="GO" id="GO:0005840">
    <property type="term" value="C:ribosome"/>
    <property type="evidence" value="ECO:0007669"/>
    <property type="project" value="UniProtKB-KW"/>
</dbReference>
<dbReference type="GO" id="GO:0003735">
    <property type="term" value="F:structural constituent of ribosome"/>
    <property type="evidence" value="ECO:0007669"/>
    <property type="project" value="InterPro"/>
</dbReference>
<dbReference type="GO" id="GO:0006412">
    <property type="term" value="P:translation"/>
    <property type="evidence" value="ECO:0007669"/>
    <property type="project" value="UniProtKB-UniRule"/>
</dbReference>
<dbReference type="Gene3D" id="1.10.287.3980">
    <property type="match status" value="1"/>
</dbReference>
<dbReference type="HAMAP" id="MF_00391">
    <property type="entry name" value="Ribosomal_bL34"/>
    <property type="match status" value="1"/>
</dbReference>
<dbReference type="InterPro" id="IPR000271">
    <property type="entry name" value="Ribosomal_bL34"/>
</dbReference>
<dbReference type="InterPro" id="IPR020939">
    <property type="entry name" value="Ribosomal_bL34_CS"/>
</dbReference>
<dbReference type="NCBIfam" id="TIGR01030">
    <property type="entry name" value="rpmH_bact"/>
    <property type="match status" value="1"/>
</dbReference>
<dbReference type="Pfam" id="PF00468">
    <property type="entry name" value="Ribosomal_L34"/>
    <property type="match status" value="1"/>
</dbReference>
<dbReference type="PROSITE" id="PS00784">
    <property type="entry name" value="RIBOSOMAL_L34"/>
    <property type="match status" value="1"/>
</dbReference>
<reference key="1">
    <citation type="submission" date="2003-11" db="EMBL/GenBank/DDBJ databases">
        <title>Whole genome sequence of Porphyra yezoensis chloroplast.</title>
        <authorList>
            <person name="Kunimoto M."/>
            <person name="Morishima K."/>
            <person name="Yoshikawa M."/>
            <person name="Fukuda S."/>
            <person name="Kobayashi T."/>
            <person name="Kobayashi M."/>
            <person name="Okazaki T."/>
            <person name="Ohara I."/>
            <person name="Nakayama I."/>
        </authorList>
    </citation>
    <scope>NUCLEOTIDE SEQUENCE [LARGE SCALE GENOMIC DNA]</scope>
    <source>
        <strain>U-51</strain>
    </source>
</reference>
<keyword id="KW-0150">Chloroplast</keyword>
<keyword id="KW-0934">Plastid</keyword>
<keyword id="KW-0687">Ribonucleoprotein</keyword>
<keyword id="KW-0689">Ribosomal protein</keyword>
<organism>
    <name type="scientific">Pyropia yezoensis</name>
    <name type="common">Susabi-nori</name>
    <name type="synonym">Porphyra yezoensis</name>
    <dbReference type="NCBI Taxonomy" id="2788"/>
    <lineage>
        <taxon>Eukaryota</taxon>
        <taxon>Rhodophyta</taxon>
        <taxon>Bangiophyceae</taxon>
        <taxon>Bangiales</taxon>
        <taxon>Bangiaceae</taxon>
        <taxon>Pyropia</taxon>
    </lineage>
</organism>
<proteinExistence type="inferred from homology"/>
<gene>
    <name evidence="1" type="primary">rpl34</name>
</gene>
<feature type="chain" id="PRO_0000276528" description="Large ribosomal subunit protein bL34c">
    <location>
        <begin position="1"/>
        <end position="46"/>
    </location>
</feature>
<protein>
    <recommendedName>
        <fullName evidence="1">Large ribosomal subunit protein bL34c</fullName>
    </recommendedName>
    <alternativeName>
        <fullName evidence="2">50S ribosomal protein L34, chloroplastic</fullName>
    </alternativeName>
</protein>
<accession>Q1XDU7</accession>
<name>RK34_PYRYE</name>
<evidence type="ECO:0000255" key="1">
    <source>
        <dbReference type="HAMAP-Rule" id="MF_00391"/>
    </source>
</evidence>
<evidence type="ECO:0000305" key="2"/>
<geneLocation type="chloroplast"/>
<comment type="subcellular location">
    <subcellularLocation>
        <location>Plastid</location>
        <location>Chloroplast</location>
    </subcellularLocation>
</comment>
<comment type="similarity">
    <text evidence="1">Belongs to the bacterial ribosomal protein bL34 family.</text>
</comment>
<sequence>MTKRTLQGSKRKKIRVSGFRARMKTPCGRSILNSRRRKGRKKIMVS</sequence>